<proteinExistence type="inferred from homology"/>
<name>DER_HALOH</name>
<reference key="1">
    <citation type="journal article" date="2009" name="PLoS ONE">
        <title>Genome analysis of the anaerobic thermohalophilic bacterium Halothermothrix orenii.</title>
        <authorList>
            <person name="Mavromatis K."/>
            <person name="Ivanova N."/>
            <person name="Anderson I."/>
            <person name="Lykidis A."/>
            <person name="Hooper S.D."/>
            <person name="Sun H."/>
            <person name="Kunin V."/>
            <person name="Lapidus A."/>
            <person name="Hugenholtz P."/>
            <person name="Patel B."/>
            <person name="Kyrpides N.C."/>
        </authorList>
    </citation>
    <scope>NUCLEOTIDE SEQUENCE [LARGE SCALE GENOMIC DNA]</scope>
    <source>
        <strain>H 168 / OCM 544 / DSM 9562</strain>
    </source>
</reference>
<accession>B8CWY9</accession>
<organism>
    <name type="scientific">Halothermothrix orenii (strain H 168 / OCM 544 / DSM 9562)</name>
    <dbReference type="NCBI Taxonomy" id="373903"/>
    <lineage>
        <taxon>Bacteria</taxon>
        <taxon>Bacillati</taxon>
        <taxon>Bacillota</taxon>
        <taxon>Clostridia</taxon>
        <taxon>Halanaerobiales</taxon>
        <taxon>Halothermotrichaceae</taxon>
        <taxon>Halothermothrix</taxon>
    </lineage>
</organism>
<gene>
    <name evidence="1" type="primary">der</name>
    <name type="synonym">engA</name>
    <name type="ordered locus">Hore_10530</name>
</gene>
<comment type="function">
    <text evidence="1">GTPase that plays an essential role in the late steps of ribosome biogenesis.</text>
</comment>
<comment type="subunit">
    <text evidence="1">Associates with the 50S ribosomal subunit.</text>
</comment>
<comment type="similarity">
    <text evidence="1">Belongs to the TRAFAC class TrmE-Era-EngA-EngB-Septin-like GTPase superfamily. EngA (Der) GTPase family.</text>
</comment>
<protein>
    <recommendedName>
        <fullName evidence="1">GTPase Der</fullName>
    </recommendedName>
    <alternativeName>
        <fullName evidence="1">GTP-binding protein EngA</fullName>
    </alternativeName>
</protein>
<sequence>MAKPVVAIVGRPNVGKSTLFNRLAGYRISIVEGEPNVTRDRIYADVNWLDRSFIIVDTGGIDPYDRDQIKNMVKYQAQMAIDEASLILFVVDGRNGLTATDEEVAAFLRKSNKKVILVVNKVDDFKNMEEDCWEFYTLGFDKLIPISAEHGKNTGDLLDEIVNMLPEKGPEDSDDDAIDVAIIGKPNVGKSSLVNYIVGQERVIVSDIPGTTRDAIDTLVEKNGHRYNLIDTAGLRKKSRVKEATEYYSALRTIKAIDRSDGVIMMIDALEGVTEQDKKIAGYAHEAGKAIVLAVNKWDLVEKDTHTMENYKEEIYYNLKFLQYAPVTFISALTGKRVQELLKLIEYVVDQNSRRVKTGLLNEVVQESIQLREPPTRKGKKLKIFYTTQVGIKPPTFVFFVNNPGLVHFAYQRYLENSLRDAFGFVGSPIRLKFKQKT</sequence>
<evidence type="ECO:0000255" key="1">
    <source>
        <dbReference type="HAMAP-Rule" id="MF_00195"/>
    </source>
</evidence>
<keyword id="KW-0342">GTP-binding</keyword>
<keyword id="KW-0547">Nucleotide-binding</keyword>
<keyword id="KW-1185">Reference proteome</keyword>
<keyword id="KW-0677">Repeat</keyword>
<keyword id="KW-0690">Ribosome biogenesis</keyword>
<feature type="chain" id="PRO_1000124361" description="GTPase Der">
    <location>
        <begin position="1"/>
        <end position="438"/>
    </location>
</feature>
<feature type="domain" description="EngA-type G 1">
    <location>
        <begin position="4"/>
        <end position="169"/>
    </location>
</feature>
<feature type="domain" description="EngA-type G 2">
    <location>
        <begin position="178"/>
        <end position="353"/>
    </location>
</feature>
<feature type="domain" description="KH-like" evidence="1">
    <location>
        <begin position="354"/>
        <end position="438"/>
    </location>
</feature>
<feature type="binding site" evidence="1">
    <location>
        <begin position="10"/>
        <end position="17"/>
    </location>
    <ligand>
        <name>GTP</name>
        <dbReference type="ChEBI" id="CHEBI:37565"/>
        <label>1</label>
    </ligand>
</feature>
<feature type="binding site" evidence="1">
    <location>
        <begin position="57"/>
        <end position="61"/>
    </location>
    <ligand>
        <name>GTP</name>
        <dbReference type="ChEBI" id="CHEBI:37565"/>
        <label>1</label>
    </ligand>
</feature>
<feature type="binding site" evidence="1">
    <location>
        <begin position="120"/>
        <end position="123"/>
    </location>
    <ligand>
        <name>GTP</name>
        <dbReference type="ChEBI" id="CHEBI:37565"/>
        <label>1</label>
    </ligand>
</feature>
<feature type="binding site" evidence="1">
    <location>
        <begin position="184"/>
        <end position="191"/>
    </location>
    <ligand>
        <name>GTP</name>
        <dbReference type="ChEBI" id="CHEBI:37565"/>
        <label>2</label>
    </ligand>
</feature>
<feature type="binding site" evidence="1">
    <location>
        <begin position="231"/>
        <end position="235"/>
    </location>
    <ligand>
        <name>GTP</name>
        <dbReference type="ChEBI" id="CHEBI:37565"/>
        <label>2</label>
    </ligand>
</feature>
<feature type="binding site" evidence="1">
    <location>
        <begin position="296"/>
        <end position="299"/>
    </location>
    <ligand>
        <name>GTP</name>
        <dbReference type="ChEBI" id="CHEBI:37565"/>
        <label>2</label>
    </ligand>
</feature>
<dbReference type="EMBL" id="CP001098">
    <property type="protein sequence ID" value="ACL69808.1"/>
    <property type="molecule type" value="Genomic_DNA"/>
</dbReference>
<dbReference type="RefSeq" id="WP_012635993.1">
    <property type="nucleotide sequence ID" value="NC_011899.1"/>
</dbReference>
<dbReference type="SMR" id="B8CWY9"/>
<dbReference type="STRING" id="373903.Hore_10530"/>
<dbReference type="KEGG" id="hor:Hore_10530"/>
<dbReference type="eggNOG" id="COG1160">
    <property type="taxonomic scope" value="Bacteria"/>
</dbReference>
<dbReference type="HOGENOM" id="CLU_016077_6_2_9"/>
<dbReference type="OrthoDB" id="9805918at2"/>
<dbReference type="Proteomes" id="UP000000719">
    <property type="component" value="Chromosome"/>
</dbReference>
<dbReference type="GO" id="GO:0005525">
    <property type="term" value="F:GTP binding"/>
    <property type="evidence" value="ECO:0007669"/>
    <property type="project" value="UniProtKB-UniRule"/>
</dbReference>
<dbReference type="GO" id="GO:0043022">
    <property type="term" value="F:ribosome binding"/>
    <property type="evidence" value="ECO:0007669"/>
    <property type="project" value="TreeGrafter"/>
</dbReference>
<dbReference type="GO" id="GO:0042254">
    <property type="term" value="P:ribosome biogenesis"/>
    <property type="evidence" value="ECO:0007669"/>
    <property type="project" value="UniProtKB-KW"/>
</dbReference>
<dbReference type="CDD" id="cd01894">
    <property type="entry name" value="EngA1"/>
    <property type="match status" value="1"/>
</dbReference>
<dbReference type="CDD" id="cd01895">
    <property type="entry name" value="EngA2"/>
    <property type="match status" value="1"/>
</dbReference>
<dbReference type="FunFam" id="3.30.300.20:FF:000004">
    <property type="entry name" value="GTPase Der"/>
    <property type="match status" value="1"/>
</dbReference>
<dbReference type="FunFam" id="3.40.50.300:FF:000040">
    <property type="entry name" value="GTPase Der"/>
    <property type="match status" value="1"/>
</dbReference>
<dbReference type="FunFam" id="3.40.50.300:FF:000057">
    <property type="entry name" value="GTPase Der"/>
    <property type="match status" value="1"/>
</dbReference>
<dbReference type="Gene3D" id="3.30.300.20">
    <property type="match status" value="1"/>
</dbReference>
<dbReference type="Gene3D" id="3.40.50.300">
    <property type="entry name" value="P-loop containing nucleotide triphosphate hydrolases"/>
    <property type="match status" value="2"/>
</dbReference>
<dbReference type="HAMAP" id="MF_00195">
    <property type="entry name" value="GTPase_Der"/>
    <property type="match status" value="1"/>
</dbReference>
<dbReference type="InterPro" id="IPR031166">
    <property type="entry name" value="G_ENGA"/>
</dbReference>
<dbReference type="InterPro" id="IPR006073">
    <property type="entry name" value="GTP-bd"/>
</dbReference>
<dbReference type="InterPro" id="IPR016484">
    <property type="entry name" value="GTPase_Der"/>
</dbReference>
<dbReference type="InterPro" id="IPR032859">
    <property type="entry name" value="KH_dom-like"/>
</dbReference>
<dbReference type="InterPro" id="IPR015946">
    <property type="entry name" value="KH_dom-like_a/b"/>
</dbReference>
<dbReference type="InterPro" id="IPR027417">
    <property type="entry name" value="P-loop_NTPase"/>
</dbReference>
<dbReference type="InterPro" id="IPR005225">
    <property type="entry name" value="Small_GTP-bd"/>
</dbReference>
<dbReference type="NCBIfam" id="TIGR03594">
    <property type="entry name" value="GTPase_EngA"/>
    <property type="match status" value="1"/>
</dbReference>
<dbReference type="NCBIfam" id="TIGR00231">
    <property type="entry name" value="small_GTP"/>
    <property type="match status" value="2"/>
</dbReference>
<dbReference type="PANTHER" id="PTHR43834">
    <property type="entry name" value="GTPASE DER"/>
    <property type="match status" value="1"/>
</dbReference>
<dbReference type="PANTHER" id="PTHR43834:SF6">
    <property type="entry name" value="GTPASE DER"/>
    <property type="match status" value="1"/>
</dbReference>
<dbReference type="Pfam" id="PF14714">
    <property type="entry name" value="KH_dom-like"/>
    <property type="match status" value="1"/>
</dbReference>
<dbReference type="Pfam" id="PF01926">
    <property type="entry name" value="MMR_HSR1"/>
    <property type="match status" value="2"/>
</dbReference>
<dbReference type="PIRSF" id="PIRSF006485">
    <property type="entry name" value="GTP-binding_EngA"/>
    <property type="match status" value="1"/>
</dbReference>
<dbReference type="PRINTS" id="PR00326">
    <property type="entry name" value="GTP1OBG"/>
</dbReference>
<dbReference type="SUPFAM" id="SSF52540">
    <property type="entry name" value="P-loop containing nucleoside triphosphate hydrolases"/>
    <property type="match status" value="2"/>
</dbReference>
<dbReference type="PROSITE" id="PS51712">
    <property type="entry name" value="G_ENGA"/>
    <property type="match status" value="2"/>
</dbReference>